<dbReference type="EC" id="2.7.11.14" evidence="10"/>
<dbReference type="EMBL" id="AY900004">
    <property type="protein sequence ID" value="AAX69081.1"/>
    <property type="molecule type" value="mRNA"/>
</dbReference>
<dbReference type="EMBL" id="AB212995">
    <property type="protein sequence ID" value="BAE92858.1"/>
    <property type="molecule type" value="mRNA"/>
</dbReference>
<dbReference type="EMBL" id="CR377211">
    <property type="protein sequence ID" value="CAQ13370.1"/>
    <property type="molecule type" value="Genomic_DNA"/>
</dbReference>
<dbReference type="EMBL" id="BC163587">
    <property type="protein sequence ID" value="AAI63587.1"/>
    <property type="molecule type" value="mRNA"/>
</dbReference>
<dbReference type="RefSeq" id="NP_001027011.2">
    <property type="nucleotide sequence ID" value="NM_001031841.3"/>
</dbReference>
<dbReference type="SMR" id="Q49HM9"/>
<dbReference type="FunCoup" id="Q49HM9">
    <property type="interactions" value="424"/>
</dbReference>
<dbReference type="STRING" id="7955.ENSDARP00000091060"/>
<dbReference type="PaxDb" id="7955-ENSDARP00000091060"/>
<dbReference type="Ensembl" id="ENSDART00000100287">
    <property type="protein sequence ID" value="ENSDARP00000091060"/>
    <property type="gene ID" value="ENSDARG00000020602"/>
</dbReference>
<dbReference type="GeneID" id="566120"/>
<dbReference type="KEGG" id="dre:566120"/>
<dbReference type="AGR" id="ZFIN:ZDB-GENE-050824-1"/>
<dbReference type="CTD" id="566120"/>
<dbReference type="ZFIN" id="ZDB-GENE-050824-1">
    <property type="gene designation" value="grk7a"/>
</dbReference>
<dbReference type="eggNOG" id="KOG0986">
    <property type="taxonomic scope" value="Eukaryota"/>
</dbReference>
<dbReference type="HOGENOM" id="CLU_000288_63_41_1"/>
<dbReference type="InParanoid" id="Q49HM9"/>
<dbReference type="OMA" id="YFTEFRV"/>
<dbReference type="OrthoDB" id="354826at2759"/>
<dbReference type="PhylomeDB" id="Q49HM9"/>
<dbReference type="TreeFam" id="TF313940"/>
<dbReference type="BRENDA" id="2.7.11.14">
    <property type="organism ID" value="928"/>
</dbReference>
<dbReference type="SABIO-RK" id="Q49HM9"/>
<dbReference type="PRO" id="PR:Q49HM9"/>
<dbReference type="Proteomes" id="UP000000437">
    <property type="component" value="Chromosome 2"/>
</dbReference>
<dbReference type="Bgee" id="ENSDARG00000020602">
    <property type="expression patterns" value="Expressed in retina and 9 other cell types or tissues"/>
</dbReference>
<dbReference type="GO" id="GO:0005737">
    <property type="term" value="C:cytoplasm"/>
    <property type="evidence" value="ECO:0000318"/>
    <property type="project" value="GO_Central"/>
</dbReference>
<dbReference type="GO" id="GO:0016020">
    <property type="term" value="C:membrane"/>
    <property type="evidence" value="ECO:0007669"/>
    <property type="project" value="UniProtKB-SubCell"/>
</dbReference>
<dbReference type="GO" id="GO:0005524">
    <property type="term" value="F:ATP binding"/>
    <property type="evidence" value="ECO:0007669"/>
    <property type="project" value="UniProtKB-KW"/>
</dbReference>
<dbReference type="GO" id="GO:0009881">
    <property type="term" value="F:photoreceptor activity"/>
    <property type="evidence" value="ECO:0000315"/>
    <property type="project" value="ZFIN"/>
</dbReference>
<dbReference type="GO" id="GO:0050254">
    <property type="term" value="F:rhodopsin kinase activity"/>
    <property type="evidence" value="ECO:0000314"/>
    <property type="project" value="ZFIN"/>
</dbReference>
<dbReference type="GO" id="GO:0036368">
    <property type="term" value="P:cone photoresponse recovery"/>
    <property type="evidence" value="ECO:0000315"/>
    <property type="project" value="ZFIN"/>
</dbReference>
<dbReference type="GO" id="GO:0007603">
    <property type="term" value="P:phototransduction, visible light"/>
    <property type="evidence" value="ECO:0000315"/>
    <property type="project" value="ZFIN"/>
</dbReference>
<dbReference type="GO" id="GO:0009966">
    <property type="term" value="P:regulation of signal transduction"/>
    <property type="evidence" value="ECO:0000318"/>
    <property type="project" value="GO_Central"/>
</dbReference>
<dbReference type="GO" id="GO:0007601">
    <property type="term" value="P:visual perception"/>
    <property type="evidence" value="ECO:0000315"/>
    <property type="project" value="ZFIN"/>
</dbReference>
<dbReference type="CDD" id="cd08749">
    <property type="entry name" value="RGS_GRK7"/>
    <property type="match status" value="1"/>
</dbReference>
<dbReference type="FunFam" id="1.10.510.10:FF:000074">
    <property type="entry name" value="G protein-coupled receptor kinase"/>
    <property type="match status" value="1"/>
</dbReference>
<dbReference type="Gene3D" id="3.30.200.20">
    <property type="entry name" value="Phosphorylase Kinase, domain 1"/>
    <property type="match status" value="1"/>
</dbReference>
<dbReference type="Gene3D" id="1.10.167.10">
    <property type="entry name" value="Regulator of G-protein Signalling 4, domain 2"/>
    <property type="match status" value="1"/>
</dbReference>
<dbReference type="Gene3D" id="1.10.510.10">
    <property type="entry name" value="Transferase(Phosphotransferase) domain 1"/>
    <property type="match status" value="1"/>
</dbReference>
<dbReference type="InterPro" id="IPR000961">
    <property type="entry name" value="AGC-kinase_C"/>
</dbReference>
<dbReference type="InterPro" id="IPR000239">
    <property type="entry name" value="GPCR_kinase"/>
</dbReference>
<dbReference type="InterPro" id="IPR011009">
    <property type="entry name" value="Kinase-like_dom_sf"/>
</dbReference>
<dbReference type="InterPro" id="IPR000719">
    <property type="entry name" value="Prot_kinase_dom"/>
</dbReference>
<dbReference type="InterPro" id="IPR017441">
    <property type="entry name" value="Protein_kinase_ATP_BS"/>
</dbReference>
<dbReference type="InterPro" id="IPR016137">
    <property type="entry name" value="RGS"/>
</dbReference>
<dbReference type="InterPro" id="IPR036305">
    <property type="entry name" value="RGS_sf"/>
</dbReference>
<dbReference type="InterPro" id="IPR044926">
    <property type="entry name" value="RGS_subdomain_2"/>
</dbReference>
<dbReference type="InterPro" id="IPR008271">
    <property type="entry name" value="Ser/Thr_kinase_AS"/>
</dbReference>
<dbReference type="PANTHER" id="PTHR24355">
    <property type="entry name" value="G PROTEIN-COUPLED RECEPTOR KINASE/RIBOSOMAL PROTEIN S6 KINASE"/>
    <property type="match status" value="1"/>
</dbReference>
<dbReference type="PANTHER" id="PTHR24355:SF12">
    <property type="entry name" value="RHODOPSIN KINASE GRK7"/>
    <property type="match status" value="1"/>
</dbReference>
<dbReference type="Pfam" id="PF00069">
    <property type="entry name" value="Pkinase"/>
    <property type="match status" value="1"/>
</dbReference>
<dbReference type="Pfam" id="PF00615">
    <property type="entry name" value="RGS"/>
    <property type="match status" value="1"/>
</dbReference>
<dbReference type="PRINTS" id="PR00717">
    <property type="entry name" value="GPCRKINASE"/>
</dbReference>
<dbReference type="SMART" id="SM00315">
    <property type="entry name" value="RGS"/>
    <property type="match status" value="1"/>
</dbReference>
<dbReference type="SMART" id="SM00133">
    <property type="entry name" value="S_TK_X"/>
    <property type="match status" value="1"/>
</dbReference>
<dbReference type="SMART" id="SM00220">
    <property type="entry name" value="S_TKc"/>
    <property type="match status" value="1"/>
</dbReference>
<dbReference type="SUPFAM" id="SSF56112">
    <property type="entry name" value="Protein kinase-like (PK-like)"/>
    <property type="match status" value="1"/>
</dbReference>
<dbReference type="SUPFAM" id="SSF48097">
    <property type="entry name" value="Regulator of G-protein signaling, RGS"/>
    <property type="match status" value="1"/>
</dbReference>
<dbReference type="PROSITE" id="PS51285">
    <property type="entry name" value="AGC_KINASE_CTER"/>
    <property type="match status" value="1"/>
</dbReference>
<dbReference type="PROSITE" id="PS00107">
    <property type="entry name" value="PROTEIN_KINASE_ATP"/>
    <property type="match status" value="1"/>
</dbReference>
<dbReference type="PROSITE" id="PS50011">
    <property type="entry name" value="PROTEIN_KINASE_DOM"/>
    <property type="match status" value="1"/>
</dbReference>
<dbReference type="PROSITE" id="PS00108">
    <property type="entry name" value="PROTEIN_KINASE_ST"/>
    <property type="match status" value="1"/>
</dbReference>
<dbReference type="PROSITE" id="PS50132">
    <property type="entry name" value="RGS"/>
    <property type="match status" value="1"/>
</dbReference>
<accession>Q49HM9</accession>
<accession>Q1XHL8</accession>
<organism>
    <name type="scientific">Danio rerio</name>
    <name type="common">Zebrafish</name>
    <name type="synonym">Brachydanio rerio</name>
    <dbReference type="NCBI Taxonomy" id="7955"/>
    <lineage>
        <taxon>Eukaryota</taxon>
        <taxon>Metazoa</taxon>
        <taxon>Chordata</taxon>
        <taxon>Craniata</taxon>
        <taxon>Vertebrata</taxon>
        <taxon>Euteleostomi</taxon>
        <taxon>Actinopterygii</taxon>
        <taxon>Neopterygii</taxon>
        <taxon>Teleostei</taxon>
        <taxon>Ostariophysi</taxon>
        <taxon>Cypriniformes</taxon>
        <taxon>Danionidae</taxon>
        <taxon>Danioninae</taxon>
        <taxon>Danio</taxon>
    </lineage>
</organism>
<sequence length="549" mass="62232">MCDMGGLDNLVANTAYLKAQGGDDKEMKKRRRSLSLPKPEQCASLRTSLDKDFESLCEKQPIGKKLFRQYLSQGGPECTTAAEFLDDLNEWELSESAARDKARTNIINKFCKEGSKSSLTFLTGDVATKCKAVSDKDFEEVMGQVKTATKEFLKGKPFTEYQASPFFDKFLQWKEYEKQPISEKYFYEFRTLGKGGFGEVCAVQVKNTGQMYACKKLCKKRLKKKHGEKMALLEKKILERVNSLFIVSLAYAYDTKTHLCLVMSLMNGGDLKYHIYNIGEKGIEMDRIIYYTAQIATGILHLHDMDIVYRDMKPENVLLDSQGQCRLSDLGLAVEIAVGKTISQKAGTGAYMAPEILNETPYRTSVDWWALGCSIYEMVAGYTPFKGPDAKKEKVEKEEVQRRILNEEPKFEHKNFDAATIDIIKQFLKKKIDERLGCKNDDPRKHEWFKSINFARLEAGLIDPPWVPKPNVVYAKDTGDIAEFSEIKGIEFDAKDDKFFKEFSTGAVSIAWQQEMIDTGLFDELSDPNRKESSGGSDDDKKSGTCTLL</sequence>
<reference key="1">
    <citation type="journal article" date="2005" name="Neuron">
        <title>Knockdown of cone-specific kinase GRK7 in larval zebrafish leads to impaired cone response recovery and delayed dark adaptation.</title>
        <authorList>
            <person name="Rinner O."/>
            <person name="Makhankov Y.V."/>
            <person name="Biehlmaier O."/>
            <person name="Neuhauss S.C."/>
        </authorList>
    </citation>
    <scope>NUCLEOTIDE SEQUENCE [MRNA]</scope>
    <scope>FUNCTION</scope>
    <scope>DISRUPTION PHENOTYPE</scope>
</reference>
<reference key="2">
    <citation type="journal article" date="2006" name="J. Neurochem.">
        <title>GRK1 and GRK7: unique cellular distribution and widely different activities of opsin phosphorylation in the zebrafish rods and cones.</title>
        <authorList>
            <person name="Wada Y."/>
            <person name="Sugiyama J."/>
            <person name="Okano T."/>
            <person name="Fukada Y."/>
        </authorList>
    </citation>
    <scope>NUCLEOTIDE SEQUENCE [MRNA]</scope>
    <scope>CATALYTIC ACTIVITY</scope>
    <scope>BIOPHYSICOCHEMICAL PROPERTIES</scope>
    <scope>TISSUE SPECIFICITY</scope>
</reference>
<reference key="3">
    <citation type="journal article" date="2013" name="Nature">
        <title>The zebrafish reference genome sequence and its relationship to the human genome.</title>
        <authorList>
            <person name="Howe K."/>
            <person name="Clark M.D."/>
            <person name="Torroja C.F."/>
            <person name="Torrance J."/>
            <person name="Berthelot C."/>
            <person name="Muffato M."/>
            <person name="Collins J.E."/>
            <person name="Humphray S."/>
            <person name="McLaren K."/>
            <person name="Matthews L."/>
            <person name="McLaren S."/>
            <person name="Sealy I."/>
            <person name="Caccamo M."/>
            <person name="Churcher C."/>
            <person name="Scott C."/>
            <person name="Barrett J.C."/>
            <person name="Koch R."/>
            <person name="Rauch G.J."/>
            <person name="White S."/>
            <person name="Chow W."/>
            <person name="Kilian B."/>
            <person name="Quintais L.T."/>
            <person name="Guerra-Assuncao J.A."/>
            <person name="Zhou Y."/>
            <person name="Gu Y."/>
            <person name="Yen J."/>
            <person name="Vogel J.H."/>
            <person name="Eyre T."/>
            <person name="Redmond S."/>
            <person name="Banerjee R."/>
            <person name="Chi J."/>
            <person name="Fu B."/>
            <person name="Langley E."/>
            <person name="Maguire S.F."/>
            <person name="Laird G.K."/>
            <person name="Lloyd D."/>
            <person name="Kenyon E."/>
            <person name="Donaldson S."/>
            <person name="Sehra H."/>
            <person name="Almeida-King J."/>
            <person name="Loveland J."/>
            <person name="Trevanion S."/>
            <person name="Jones M."/>
            <person name="Quail M."/>
            <person name="Willey D."/>
            <person name="Hunt A."/>
            <person name="Burton J."/>
            <person name="Sims S."/>
            <person name="McLay K."/>
            <person name="Plumb B."/>
            <person name="Davis J."/>
            <person name="Clee C."/>
            <person name="Oliver K."/>
            <person name="Clark R."/>
            <person name="Riddle C."/>
            <person name="Elliot D."/>
            <person name="Threadgold G."/>
            <person name="Harden G."/>
            <person name="Ware D."/>
            <person name="Begum S."/>
            <person name="Mortimore B."/>
            <person name="Kerry G."/>
            <person name="Heath P."/>
            <person name="Phillimore B."/>
            <person name="Tracey A."/>
            <person name="Corby N."/>
            <person name="Dunn M."/>
            <person name="Johnson C."/>
            <person name="Wood J."/>
            <person name="Clark S."/>
            <person name="Pelan S."/>
            <person name="Griffiths G."/>
            <person name="Smith M."/>
            <person name="Glithero R."/>
            <person name="Howden P."/>
            <person name="Barker N."/>
            <person name="Lloyd C."/>
            <person name="Stevens C."/>
            <person name="Harley J."/>
            <person name="Holt K."/>
            <person name="Panagiotidis G."/>
            <person name="Lovell J."/>
            <person name="Beasley H."/>
            <person name="Henderson C."/>
            <person name="Gordon D."/>
            <person name="Auger K."/>
            <person name="Wright D."/>
            <person name="Collins J."/>
            <person name="Raisen C."/>
            <person name="Dyer L."/>
            <person name="Leung K."/>
            <person name="Robertson L."/>
            <person name="Ambridge K."/>
            <person name="Leongamornlert D."/>
            <person name="McGuire S."/>
            <person name="Gilderthorp R."/>
            <person name="Griffiths C."/>
            <person name="Manthravadi D."/>
            <person name="Nichol S."/>
            <person name="Barker G."/>
            <person name="Whitehead S."/>
            <person name="Kay M."/>
            <person name="Brown J."/>
            <person name="Murnane C."/>
            <person name="Gray E."/>
            <person name="Humphries M."/>
            <person name="Sycamore N."/>
            <person name="Barker D."/>
            <person name="Saunders D."/>
            <person name="Wallis J."/>
            <person name="Babbage A."/>
            <person name="Hammond S."/>
            <person name="Mashreghi-Mohammadi M."/>
            <person name="Barr L."/>
            <person name="Martin S."/>
            <person name="Wray P."/>
            <person name="Ellington A."/>
            <person name="Matthews N."/>
            <person name="Ellwood M."/>
            <person name="Woodmansey R."/>
            <person name="Clark G."/>
            <person name="Cooper J."/>
            <person name="Tromans A."/>
            <person name="Grafham D."/>
            <person name="Skuce C."/>
            <person name="Pandian R."/>
            <person name="Andrews R."/>
            <person name="Harrison E."/>
            <person name="Kimberley A."/>
            <person name="Garnett J."/>
            <person name="Fosker N."/>
            <person name="Hall R."/>
            <person name="Garner P."/>
            <person name="Kelly D."/>
            <person name="Bird C."/>
            <person name="Palmer S."/>
            <person name="Gehring I."/>
            <person name="Berger A."/>
            <person name="Dooley C.M."/>
            <person name="Ersan-Urun Z."/>
            <person name="Eser C."/>
            <person name="Geiger H."/>
            <person name="Geisler M."/>
            <person name="Karotki L."/>
            <person name="Kirn A."/>
            <person name="Konantz J."/>
            <person name="Konantz M."/>
            <person name="Oberlander M."/>
            <person name="Rudolph-Geiger S."/>
            <person name="Teucke M."/>
            <person name="Lanz C."/>
            <person name="Raddatz G."/>
            <person name="Osoegawa K."/>
            <person name="Zhu B."/>
            <person name="Rapp A."/>
            <person name="Widaa S."/>
            <person name="Langford C."/>
            <person name="Yang F."/>
            <person name="Schuster S.C."/>
            <person name="Carter N.P."/>
            <person name="Harrow J."/>
            <person name="Ning Z."/>
            <person name="Herrero J."/>
            <person name="Searle S.M."/>
            <person name="Enright A."/>
            <person name="Geisler R."/>
            <person name="Plasterk R.H."/>
            <person name="Lee C."/>
            <person name="Westerfield M."/>
            <person name="de Jong P.J."/>
            <person name="Zon L.I."/>
            <person name="Postlethwait J.H."/>
            <person name="Nusslein-Volhard C."/>
            <person name="Hubbard T.J."/>
            <person name="Roest Crollius H."/>
            <person name="Rogers J."/>
            <person name="Stemple D.L."/>
        </authorList>
    </citation>
    <scope>NUCLEOTIDE SEQUENCE [LARGE SCALE GENOMIC DNA]</scope>
    <source>
        <strain>Tuebingen</strain>
    </source>
</reference>
<reference key="4">
    <citation type="submission" date="2008-04" db="EMBL/GenBank/DDBJ databases">
        <authorList>
            <consortium name="NIH - Zebrafish Gene Collection (ZGC) project"/>
        </authorList>
    </citation>
    <scope>NUCLEOTIDE SEQUENCE [LARGE SCALE MRNA]</scope>
</reference>
<gene>
    <name type="primary">grk7a</name>
    <name type="synonym">grk7-1</name>
    <name type="ORF">dkeyp-13a3.1</name>
</gene>
<proteinExistence type="evidence at protein level"/>
<comment type="function">
    <text evidence="9">Retina-specific kinase involved in the shutoff of the photoresponse and adaptation to changing light conditions via cone opsin phosphorylation, including rhodopsin (RHO).</text>
</comment>
<comment type="catalytic activity">
    <reaction evidence="10">
        <text>L-threonyl-[rhodopsin] + ATP = O-phospho-L-threonyl-[rhodopsin] + ADP + H(+)</text>
        <dbReference type="Rhea" id="RHEA:56552"/>
        <dbReference type="Rhea" id="RHEA-COMP:14596"/>
        <dbReference type="Rhea" id="RHEA-COMP:14597"/>
        <dbReference type="ChEBI" id="CHEBI:15378"/>
        <dbReference type="ChEBI" id="CHEBI:30013"/>
        <dbReference type="ChEBI" id="CHEBI:30616"/>
        <dbReference type="ChEBI" id="CHEBI:61977"/>
        <dbReference type="ChEBI" id="CHEBI:456216"/>
        <dbReference type="EC" id="2.7.11.14"/>
    </reaction>
</comment>
<comment type="catalytic activity">
    <reaction evidence="10">
        <text>L-seryl-[rhodopsin] + ATP = O-phospho-L-seryl-[rhodopsin] + ADP + H(+)</text>
        <dbReference type="Rhea" id="RHEA:23356"/>
        <dbReference type="Rhea" id="RHEA-COMP:14594"/>
        <dbReference type="Rhea" id="RHEA-COMP:14595"/>
        <dbReference type="ChEBI" id="CHEBI:15378"/>
        <dbReference type="ChEBI" id="CHEBI:29999"/>
        <dbReference type="ChEBI" id="CHEBI:30616"/>
        <dbReference type="ChEBI" id="CHEBI:83421"/>
        <dbReference type="ChEBI" id="CHEBI:456216"/>
        <dbReference type="EC" id="2.7.11.14"/>
    </reaction>
</comment>
<comment type="biophysicochemical properties">
    <kinetics>
        <KM evidence="10">4.4 uM for rhodopsin</KM>
        <Vmax evidence="10">773.0 nmol/min/mg enzyme</Vmax>
    </kinetics>
</comment>
<comment type="subcellular location">
    <subcellularLocation>
        <location evidence="2">Membrane</location>
        <topology evidence="2">Lipid-anchor</topology>
    </subcellularLocation>
</comment>
<comment type="PTM">
    <text evidence="1">Phosphorylation at Ser-33 is regulated by light and activated by cAMP.</text>
</comment>
<comment type="disruption phenotype">
    <text evidence="9">Impaired cone response recovery and delayed dark adaptation.</text>
</comment>
<comment type="miscellaneous">
    <text>Although the protein is present in a diversity of vertebrates ranging from bony fish to mammals, the mouse and rat orthologous proteins do not exist.</text>
</comment>
<comment type="similarity">
    <text evidence="11">Belongs to the protein kinase superfamily. AGC Ser/Thr protein kinase family. GPRK subfamily.</text>
</comment>
<feature type="chain" id="PRO_0000412812" description="Rhodopsin kinase grk7a">
    <location>
        <begin position="1"/>
        <end position="546"/>
    </location>
</feature>
<feature type="propeptide" id="PRO_0000412813" description="Removed in mature form" evidence="1">
    <location>
        <begin position="547"/>
        <end position="549"/>
    </location>
</feature>
<feature type="domain" description="RGS" evidence="5">
    <location>
        <begin position="53"/>
        <end position="171"/>
    </location>
</feature>
<feature type="domain" description="Protein kinase" evidence="4">
    <location>
        <begin position="186"/>
        <end position="449"/>
    </location>
</feature>
<feature type="domain" description="AGC-kinase C-terminal" evidence="6">
    <location>
        <begin position="450"/>
        <end position="515"/>
    </location>
</feature>
<feature type="region of interest" description="Disordered" evidence="8">
    <location>
        <begin position="522"/>
        <end position="549"/>
    </location>
</feature>
<feature type="compositionally biased region" description="Basic and acidic residues" evidence="8">
    <location>
        <begin position="527"/>
        <end position="543"/>
    </location>
</feature>
<feature type="active site" description="Proton acceptor" evidence="4 7">
    <location>
        <position position="311"/>
    </location>
</feature>
<feature type="binding site" evidence="4">
    <location>
        <begin position="192"/>
        <end position="200"/>
    </location>
    <ligand>
        <name>ATP</name>
        <dbReference type="ChEBI" id="CHEBI:30616"/>
    </ligand>
</feature>
<feature type="binding site" evidence="4">
    <location>
        <position position="215"/>
    </location>
    <ligand>
        <name>ATP</name>
        <dbReference type="ChEBI" id="CHEBI:30616"/>
    </ligand>
</feature>
<feature type="modified residue" description="Phosphoserine" evidence="1">
    <location>
        <position position="33"/>
    </location>
</feature>
<feature type="modified residue" description="Cysteine methyl ester" evidence="3">
    <location>
        <position position="546"/>
    </location>
</feature>
<feature type="lipid moiety-binding region" description="S-geranylgeranyl cysteine" evidence="3">
    <location>
        <position position="546"/>
    </location>
</feature>
<feature type="sequence conflict" description="In Ref. 1; AAX69081." evidence="11" ref="1">
    <original>T</original>
    <variation>I</variation>
    <location>
        <position position="80"/>
    </location>
</feature>
<feature type="sequence conflict" description="In Ref. 1; AAX69081." evidence="11" ref="1">
    <original>F</original>
    <variation>I</variation>
    <location>
        <position position="385"/>
    </location>
</feature>
<evidence type="ECO:0000250" key="1"/>
<evidence type="ECO:0000250" key="2">
    <source>
        <dbReference type="UniProtKB" id="Q8WMV0"/>
    </source>
</evidence>
<evidence type="ECO:0000255" key="3"/>
<evidence type="ECO:0000255" key="4">
    <source>
        <dbReference type="PROSITE-ProRule" id="PRU00159"/>
    </source>
</evidence>
<evidence type="ECO:0000255" key="5">
    <source>
        <dbReference type="PROSITE-ProRule" id="PRU00171"/>
    </source>
</evidence>
<evidence type="ECO:0000255" key="6">
    <source>
        <dbReference type="PROSITE-ProRule" id="PRU00618"/>
    </source>
</evidence>
<evidence type="ECO:0000255" key="7">
    <source>
        <dbReference type="PROSITE-ProRule" id="PRU10027"/>
    </source>
</evidence>
<evidence type="ECO:0000256" key="8">
    <source>
        <dbReference type="SAM" id="MobiDB-lite"/>
    </source>
</evidence>
<evidence type="ECO:0000269" key="9">
    <source>
    </source>
</evidence>
<evidence type="ECO:0000269" key="10">
    <source>
    </source>
</evidence>
<evidence type="ECO:0000305" key="11"/>
<protein>
    <recommendedName>
        <fullName>Rhodopsin kinase grk7a</fullName>
        <ecNumber evidence="10">2.7.11.14</ecNumber>
    </recommendedName>
    <alternativeName>
        <fullName>G protein-coupled receptor kinase 7-1</fullName>
    </alternativeName>
    <alternativeName>
        <fullName>G-protein-coupled receptor kinase 7A</fullName>
    </alternativeName>
</protein>
<keyword id="KW-0067">ATP-binding</keyword>
<keyword id="KW-0418">Kinase</keyword>
<keyword id="KW-0449">Lipoprotein</keyword>
<keyword id="KW-0472">Membrane</keyword>
<keyword id="KW-0488">Methylation</keyword>
<keyword id="KW-0547">Nucleotide-binding</keyword>
<keyword id="KW-0597">Phosphoprotein</keyword>
<keyword id="KW-0636">Prenylation</keyword>
<keyword id="KW-1185">Reference proteome</keyword>
<keyword id="KW-0716">Sensory transduction</keyword>
<keyword id="KW-0723">Serine/threonine-protein kinase</keyword>
<keyword id="KW-0808">Transferase</keyword>
<keyword id="KW-0844">Vision</keyword>
<name>GRK7A_DANRE</name>